<evidence type="ECO:0000255" key="1">
    <source>
        <dbReference type="HAMAP-Rule" id="MF_00577"/>
    </source>
</evidence>
<dbReference type="EC" id="4.2.1.49" evidence="1"/>
<dbReference type="EMBL" id="CP000438">
    <property type="protein sequence ID" value="ABJ14483.1"/>
    <property type="molecule type" value="Genomic_DNA"/>
</dbReference>
<dbReference type="RefSeq" id="WP_003095958.1">
    <property type="nucleotide sequence ID" value="NZ_CP034244.1"/>
</dbReference>
<dbReference type="SMR" id="Q02ER6"/>
<dbReference type="KEGG" id="pau:PA14_67350"/>
<dbReference type="PseudoCAP" id="PA14_67350"/>
<dbReference type="HOGENOM" id="CLU_018868_0_1_6"/>
<dbReference type="BioCyc" id="PAER208963:G1G74-5682-MONOMER"/>
<dbReference type="UniPathway" id="UPA00379">
    <property type="reaction ID" value="UER00550"/>
</dbReference>
<dbReference type="Proteomes" id="UP000000653">
    <property type="component" value="Chromosome"/>
</dbReference>
<dbReference type="GO" id="GO:0005737">
    <property type="term" value="C:cytoplasm"/>
    <property type="evidence" value="ECO:0007669"/>
    <property type="project" value="UniProtKB-SubCell"/>
</dbReference>
<dbReference type="GO" id="GO:0016153">
    <property type="term" value="F:urocanate hydratase activity"/>
    <property type="evidence" value="ECO:0007669"/>
    <property type="project" value="UniProtKB-UniRule"/>
</dbReference>
<dbReference type="GO" id="GO:0019556">
    <property type="term" value="P:L-histidine catabolic process to glutamate and formamide"/>
    <property type="evidence" value="ECO:0007669"/>
    <property type="project" value="UniProtKB-UniPathway"/>
</dbReference>
<dbReference type="GO" id="GO:0019557">
    <property type="term" value="P:L-histidine catabolic process to glutamate and formate"/>
    <property type="evidence" value="ECO:0007669"/>
    <property type="project" value="UniProtKB-UniPathway"/>
</dbReference>
<dbReference type="FunFam" id="3.40.50.10730:FF:000001">
    <property type="entry name" value="Urocanate hydratase"/>
    <property type="match status" value="1"/>
</dbReference>
<dbReference type="Gene3D" id="3.40.50.10730">
    <property type="entry name" value="Urocanase like domains"/>
    <property type="match status" value="1"/>
</dbReference>
<dbReference type="Gene3D" id="3.40.1770.10">
    <property type="entry name" value="Urocanase superfamily"/>
    <property type="match status" value="1"/>
</dbReference>
<dbReference type="HAMAP" id="MF_00577">
    <property type="entry name" value="HutU"/>
    <property type="match status" value="1"/>
</dbReference>
<dbReference type="InterPro" id="IPR055351">
    <property type="entry name" value="Urocanase"/>
</dbReference>
<dbReference type="InterPro" id="IPR023637">
    <property type="entry name" value="Urocanase-like"/>
</dbReference>
<dbReference type="InterPro" id="IPR035401">
    <property type="entry name" value="Urocanase_C"/>
</dbReference>
<dbReference type="InterPro" id="IPR038364">
    <property type="entry name" value="Urocanase_central_sf"/>
</dbReference>
<dbReference type="InterPro" id="IPR023636">
    <property type="entry name" value="Urocanase_CS"/>
</dbReference>
<dbReference type="InterPro" id="IPR035400">
    <property type="entry name" value="Urocanase_N"/>
</dbReference>
<dbReference type="InterPro" id="IPR035085">
    <property type="entry name" value="Urocanase_Rossmann-like"/>
</dbReference>
<dbReference type="InterPro" id="IPR036190">
    <property type="entry name" value="Urocanase_sf"/>
</dbReference>
<dbReference type="NCBIfam" id="TIGR01228">
    <property type="entry name" value="hutU"/>
    <property type="match status" value="1"/>
</dbReference>
<dbReference type="NCBIfam" id="NF003820">
    <property type="entry name" value="PRK05414.1"/>
    <property type="match status" value="1"/>
</dbReference>
<dbReference type="PANTHER" id="PTHR12216">
    <property type="entry name" value="UROCANATE HYDRATASE"/>
    <property type="match status" value="1"/>
</dbReference>
<dbReference type="PANTHER" id="PTHR12216:SF4">
    <property type="entry name" value="UROCANATE HYDRATASE"/>
    <property type="match status" value="1"/>
</dbReference>
<dbReference type="Pfam" id="PF01175">
    <property type="entry name" value="Urocanase"/>
    <property type="match status" value="1"/>
</dbReference>
<dbReference type="Pfam" id="PF17392">
    <property type="entry name" value="Urocanase_C"/>
    <property type="match status" value="1"/>
</dbReference>
<dbReference type="Pfam" id="PF17391">
    <property type="entry name" value="Urocanase_N"/>
    <property type="match status" value="1"/>
</dbReference>
<dbReference type="PIRSF" id="PIRSF001423">
    <property type="entry name" value="Urocanate_hydrat"/>
    <property type="match status" value="1"/>
</dbReference>
<dbReference type="SUPFAM" id="SSF111326">
    <property type="entry name" value="Urocanase"/>
    <property type="match status" value="1"/>
</dbReference>
<dbReference type="PROSITE" id="PS01233">
    <property type="entry name" value="UROCANASE"/>
    <property type="match status" value="1"/>
</dbReference>
<keyword id="KW-0963">Cytoplasm</keyword>
<keyword id="KW-0369">Histidine metabolism</keyword>
<keyword id="KW-0456">Lyase</keyword>
<keyword id="KW-0520">NAD</keyword>
<organism>
    <name type="scientific">Pseudomonas aeruginosa (strain UCBPP-PA14)</name>
    <dbReference type="NCBI Taxonomy" id="208963"/>
    <lineage>
        <taxon>Bacteria</taxon>
        <taxon>Pseudomonadati</taxon>
        <taxon>Pseudomonadota</taxon>
        <taxon>Gammaproteobacteria</taxon>
        <taxon>Pseudomonadales</taxon>
        <taxon>Pseudomonadaceae</taxon>
        <taxon>Pseudomonas</taxon>
    </lineage>
</organism>
<comment type="function">
    <text evidence="1">Catalyzes the conversion of urocanate to 4-imidazolone-5-propionate.</text>
</comment>
<comment type="catalytic activity">
    <reaction evidence="1">
        <text>4-imidazolone-5-propanoate = trans-urocanate + H2O</text>
        <dbReference type="Rhea" id="RHEA:13101"/>
        <dbReference type="ChEBI" id="CHEBI:15377"/>
        <dbReference type="ChEBI" id="CHEBI:17771"/>
        <dbReference type="ChEBI" id="CHEBI:77893"/>
        <dbReference type="EC" id="4.2.1.49"/>
    </reaction>
</comment>
<comment type="cofactor">
    <cofactor evidence="1">
        <name>NAD(+)</name>
        <dbReference type="ChEBI" id="CHEBI:57540"/>
    </cofactor>
    <text evidence="1">Binds 1 NAD(+) per subunit.</text>
</comment>
<comment type="pathway">
    <text evidence="1">Amino-acid degradation; L-histidine degradation into L-glutamate; N-formimidoyl-L-glutamate from L-histidine: step 2/3.</text>
</comment>
<comment type="subcellular location">
    <subcellularLocation>
        <location evidence="1">Cytoplasm</location>
    </subcellularLocation>
</comment>
<comment type="similarity">
    <text evidence="1">Belongs to the urocanase family.</text>
</comment>
<feature type="chain" id="PRO_1000025140" description="Urocanate hydratase">
    <location>
        <begin position="1"/>
        <end position="559"/>
    </location>
</feature>
<feature type="active site" evidence="1">
    <location>
        <position position="411"/>
    </location>
</feature>
<feature type="binding site" evidence="1">
    <location>
        <begin position="53"/>
        <end position="54"/>
    </location>
    <ligand>
        <name>NAD(+)</name>
        <dbReference type="ChEBI" id="CHEBI:57540"/>
    </ligand>
</feature>
<feature type="binding site" evidence="1">
    <location>
        <position position="131"/>
    </location>
    <ligand>
        <name>NAD(+)</name>
        <dbReference type="ChEBI" id="CHEBI:57540"/>
    </ligand>
</feature>
<feature type="binding site" evidence="1">
    <location>
        <begin position="177"/>
        <end position="179"/>
    </location>
    <ligand>
        <name>NAD(+)</name>
        <dbReference type="ChEBI" id="CHEBI:57540"/>
    </ligand>
</feature>
<feature type="binding site" evidence="1">
    <location>
        <position position="197"/>
    </location>
    <ligand>
        <name>NAD(+)</name>
        <dbReference type="ChEBI" id="CHEBI:57540"/>
    </ligand>
</feature>
<feature type="binding site" evidence="1">
    <location>
        <position position="202"/>
    </location>
    <ligand>
        <name>NAD(+)</name>
        <dbReference type="ChEBI" id="CHEBI:57540"/>
    </ligand>
</feature>
<feature type="binding site" evidence="1">
    <location>
        <begin position="243"/>
        <end position="244"/>
    </location>
    <ligand>
        <name>NAD(+)</name>
        <dbReference type="ChEBI" id="CHEBI:57540"/>
    </ligand>
</feature>
<feature type="binding site" evidence="1">
    <location>
        <begin position="264"/>
        <end position="268"/>
    </location>
    <ligand>
        <name>NAD(+)</name>
        <dbReference type="ChEBI" id="CHEBI:57540"/>
    </ligand>
</feature>
<feature type="binding site" evidence="1">
    <location>
        <begin position="274"/>
        <end position="275"/>
    </location>
    <ligand>
        <name>NAD(+)</name>
        <dbReference type="ChEBI" id="CHEBI:57540"/>
    </ligand>
</feature>
<feature type="binding site" evidence="1">
    <location>
        <position position="323"/>
    </location>
    <ligand>
        <name>NAD(+)</name>
        <dbReference type="ChEBI" id="CHEBI:57540"/>
    </ligand>
</feature>
<feature type="binding site" evidence="1">
    <location>
        <position position="493"/>
    </location>
    <ligand>
        <name>NAD(+)</name>
        <dbReference type="ChEBI" id="CHEBI:57540"/>
    </ligand>
</feature>
<name>HUTU_PSEAB</name>
<sequence>MTTPSKFRDIEIRAPRGTTLTAKSWLTEAPLRMLMNNLDPEVAENPRELVVYGGIGRAARNWECYDRIVETLKQLNDDETLLVQSGKPVGVFKTHANAPRVLIANSNLVPHWATWEHFNELDAKGLAMYGQMTAGSWIYIGSQGIVQGTYETFVEAGRQHYDGNLKGRWVLTAGLGGMGGAQPLAATLAGACSLNIECQQSRIDFRLRSRYVDEQAKDLDDALARIQRYTAEGKAISIALLGNAAEILPELVRRGVRPDMVTDQTSAHDPLNGYLPAGWSWEEYRDRAQTDPAAVVKAAKQSMAVHVRAMLAFQQQGVPTFDYGNNIRQMAKEEGVANAFDFPGFVPAYIRPLFCRGIGPFRWAALSGDPQDIYKTDAKVKQLIPDDAHLHRWLDMARERISFQGLPARICWVGLGLRAKLGLAFNEMVRSGELSAPIVIGRDHLDSGSVASPNRETEAMQDGSDAVSDWPLLNALLNTASGATWVSLHHGGGVGMGFSQHSGMVIVCDGSDEAAERIARVLTNDPGTGVMRHADAGYQVAIDCAKEQGLNLPMITAQR</sequence>
<proteinExistence type="inferred from homology"/>
<gene>
    <name evidence="1" type="primary">hutU</name>
    <name type="ordered locus">PA14_67350</name>
</gene>
<reference key="1">
    <citation type="journal article" date="2006" name="Genome Biol.">
        <title>Genomic analysis reveals that Pseudomonas aeruginosa virulence is combinatorial.</title>
        <authorList>
            <person name="Lee D.G."/>
            <person name="Urbach J.M."/>
            <person name="Wu G."/>
            <person name="Liberati N.T."/>
            <person name="Feinbaum R.L."/>
            <person name="Miyata S."/>
            <person name="Diggins L.T."/>
            <person name="He J."/>
            <person name="Saucier M."/>
            <person name="Deziel E."/>
            <person name="Friedman L."/>
            <person name="Li L."/>
            <person name="Grills G."/>
            <person name="Montgomery K."/>
            <person name="Kucherlapati R."/>
            <person name="Rahme L.G."/>
            <person name="Ausubel F.M."/>
        </authorList>
    </citation>
    <scope>NUCLEOTIDE SEQUENCE [LARGE SCALE GENOMIC DNA]</scope>
    <source>
        <strain>UCBPP-PA14</strain>
    </source>
</reference>
<accession>Q02ER6</accession>
<protein>
    <recommendedName>
        <fullName evidence="1">Urocanate hydratase</fullName>
        <shortName evidence="1">Urocanase</shortName>
        <ecNumber evidence="1">4.2.1.49</ecNumber>
    </recommendedName>
    <alternativeName>
        <fullName evidence="1">Imidazolonepropionate hydrolase</fullName>
    </alternativeName>
</protein>